<dbReference type="EMBL" id="AL157959">
    <property type="protein sequence ID" value="CAM07641.1"/>
    <property type="molecule type" value="Genomic_DNA"/>
</dbReference>
<dbReference type="PIR" id="A82030">
    <property type="entry name" value="A82030"/>
</dbReference>
<dbReference type="RefSeq" id="WP_002215062.1">
    <property type="nucleotide sequence ID" value="NC_003116.1"/>
</dbReference>
<dbReference type="SMR" id="Q9JWJ8"/>
<dbReference type="EnsemblBacteria" id="CAM07641">
    <property type="protein sequence ID" value="CAM07641"/>
    <property type="gene ID" value="NMA0341"/>
</dbReference>
<dbReference type="KEGG" id="nma:NMA0341"/>
<dbReference type="HOGENOM" id="CLU_115353_1_1_4"/>
<dbReference type="Proteomes" id="UP000000626">
    <property type="component" value="Chromosome"/>
</dbReference>
<dbReference type="GO" id="GO:0003676">
    <property type="term" value="F:nucleic acid binding"/>
    <property type="evidence" value="ECO:0007669"/>
    <property type="project" value="InterPro"/>
</dbReference>
<dbReference type="Gene3D" id="3.40.1350.10">
    <property type="match status" value="1"/>
</dbReference>
<dbReference type="HAMAP" id="MF_00048">
    <property type="entry name" value="UPF0102"/>
    <property type="match status" value="1"/>
</dbReference>
<dbReference type="InterPro" id="IPR011335">
    <property type="entry name" value="Restrct_endonuc-II-like"/>
</dbReference>
<dbReference type="InterPro" id="IPR011856">
    <property type="entry name" value="tRNA_endonuc-like_dom_sf"/>
</dbReference>
<dbReference type="InterPro" id="IPR003509">
    <property type="entry name" value="UPF0102_YraN-like"/>
</dbReference>
<dbReference type="NCBIfam" id="NF009150">
    <property type="entry name" value="PRK12497.1-3"/>
    <property type="match status" value="1"/>
</dbReference>
<dbReference type="NCBIfam" id="TIGR00252">
    <property type="entry name" value="YraN family protein"/>
    <property type="match status" value="1"/>
</dbReference>
<dbReference type="PANTHER" id="PTHR34039">
    <property type="entry name" value="UPF0102 PROTEIN YRAN"/>
    <property type="match status" value="1"/>
</dbReference>
<dbReference type="PANTHER" id="PTHR34039:SF1">
    <property type="entry name" value="UPF0102 PROTEIN YRAN"/>
    <property type="match status" value="1"/>
</dbReference>
<dbReference type="Pfam" id="PF02021">
    <property type="entry name" value="UPF0102"/>
    <property type="match status" value="1"/>
</dbReference>
<dbReference type="SUPFAM" id="SSF52980">
    <property type="entry name" value="Restriction endonuclease-like"/>
    <property type="match status" value="1"/>
</dbReference>
<comment type="similarity">
    <text evidence="1">Belongs to the UPF0102 family.</text>
</comment>
<sequence>MRLNHKQGEAGEDAALAFLQSQGCTLLARNWHCAYGEIDLIVKNGGMILFVEVKYRKNRQFGGAAYSISPSKLLKLQRSVEYYLQQNRLTNVPCRLDAVLIEGSRPPEWIQNITG</sequence>
<reference key="1">
    <citation type="journal article" date="2000" name="Nature">
        <title>Complete DNA sequence of a serogroup A strain of Neisseria meningitidis Z2491.</title>
        <authorList>
            <person name="Parkhill J."/>
            <person name="Achtman M."/>
            <person name="James K.D."/>
            <person name="Bentley S.D."/>
            <person name="Churcher C.M."/>
            <person name="Klee S.R."/>
            <person name="Morelli G."/>
            <person name="Basham D."/>
            <person name="Brown D."/>
            <person name="Chillingworth T."/>
            <person name="Davies R.M."/>
            <person name="Davis P."/>
            <person name="Devlin K."/>
            <person name="Feltwell T."/>
            <person name="Hamlin N."/>
            <person name="Holroyd S."/>
            <person name="Jagels K."/>
            <person name="Leather S."/>
            <person name="Moule S."/>
            <person name="Mungall K.L."/>
            <person name="Quail M.A."/>
            <person name="Rajandream M.A."/>
            <person name="Rutherford K.M."/>
            <person name="Simmonds M."/>
            <person name="Skelton J."/>
            <person name="Whitehead S."/>
            <person name="Spratt B.G."/>
            <person name="Barrell B.G."/>
        </authorList>
    </citation>
    <scope>NUCLEOTIDE SEQUENCE [LARGE SCALE GENOMIC DNA]</scope>
    <source>
        <strain>DSM 15465 / Z2491</strain>
    </source>
</reference>
<feature type="chain" id="PRO_0000167365" description="UPF0102 protein NMA0341">
    <location>
        <begin position="1"/>
        <end position="115"/>
    </location>
</feature>
<accession>Q9JWJ8</accession>
<accession>A1IPH2</accession>
<evidence type="ECO:0000255" key="1">
    <source>
        <dbReference type="HAMAP-Rule" id="MF_00048"/>
    </source>
</evidence>
<name>Y341_NEIMA</name>
<proteinExistence type="inferred from homology"/>
<organism>
    <name type="scientific">Neisseria meningitidis serogroup A / serotype 4A (strain DSM 15465 / Z2491)</name>
    <dbReference type="NCBI Taxonomy" id="122587"/>
    <lineage>
        <taxon>Bacteria</taxon>
        <taxon>Pseudomonadati</taxon>
        <taxon>Pseudomonadota</taxon>
        <taxon>Betaproteobacteria</taxon>
        <taxon>Neisseriales</taxon>
        <taxon>Neisseriaceae</taxon>
        <taxon>Neisseria</taxon>
    </lineage>
</organism>
<protein>
    <recommendedName>
        <fullName evidence="1">UPF0102 protein NMA0341</fullName>
    </recommendedName>
</protein>
<gene>
    <name type="ordered locus">NMA0341</name>
</gene>